<sequence>MSTQLVKIGTWGGNGGGRVDLSVLPRSLKSVTIRSGAAIDAIAFTYIGTDGKEHLAGPWGGGGGNPTTITLGSQEFVKGISGTFTNVVTNLKIVTNVTTYNFGQGGGTAFSLPLQSGSVVGFFGRAGALVDSIGVYVHI</sequence>
<reference key="1">
    <citation type="journal article" date="1992" name="Plant Mol. Biol.">
        <title>Structure and expression of a root-specific rice gene.</title>
        <authorList>
            <person name="de Pater B.S."/>
        </authorList>
    </citation>
    <scope>NUCLEOTIDE SEQUENCE [GENOMIC DNA]</scope>
    <scope>TISSUE SPECIFICITY</scope>
    <source>
        <strain>cv. IR36</strain>
    </source>
</reference>
<reference key="2">
    <citation type="journal article" date="2005" name="PLoS Biol.">
        <title>The genomes of Oryza sativa: a history of duplications.</title>
        <authorList>
            <person name="Yu J."/>
            <person name="Wang J."/>
            <person name="Lin W."/>
            <person name="Li S."/>
            <person name="Li H."/>
            <person name="Zhou J."/>
            <person name="Ni P."/>
            <person name="Dong W."/>
            <person name="Hu S."/>
            <person name="Zeng C."/>
            <person name="Zhang J."/>
            <person name="Zhang Y."/>
            <person name="Li R."/>
            <person name="Xu Z."/>
            <person name="Li S."/>
            <person name="Li X."/>
            <person name="Zheng H."/>
            <person name="Cong L."/>
            <person name="Lin L."/>
            <person name="Yin J."/>
            <person name="Geng J."/>
            <person name="Li G."/>
            <person name="Shi J."/>
            <person name="Liu J."/>
            <person name="Lv H."/>
            <person name="Li J."/>
            <person name="Wang J."/>
            <person name="Deng Y."/>
            <person name="Ran L."/>
            <person name="Shi X."/>
            <person name="Wang X."/>
            <person name="Wu Q."/>
            <person name="Li C."/>
            <person name="Ren X."/>
            <person name="Wang J."/>
            <person name="Wang X."/>
            <person name="Li D."/>
            <person name="Liu D."/>
            <person name="Zhang X."/>
            <person name="Ji Z."/>
            <person name="Zhao W."/>
            <person name="Sun Y."/>
            <person name="Zhang Z."/>
            <person name="Bao J."/>
            <person name="Han Y."/>
            <person name="Dong L."/>
            <person name="Ji J."/>
            <person name="Chen P."/>
            <person name="Wu S."/>
            <person name="Liu J."/>
            <person name="Xiao Y."/>
            <person name="Bu D."/>
            <person name="Tan J."/>
            <person name="Yang L."/>
            <person name="Ye C."/>
            <person name="Zhang J."/>
            <person name="Xu J."/>
            <person name="Zhou Y."/>
            <person name="Yu Y."/>
            <person name="Zhang B."/>
            <person name="Zhuang S."/>
            <person name="Wei H."/>
            <person name="Liu B."/>
            <person name="Lei M."/>
            <person name="Yu H."/>
            <person name="Li Y."/>
            <person name="Xu H."/>
            <person name="Wei S."/>
            <person name="He X."/>
            <person name="Fang L."/>
            <person name="Zhang Z."/>
            <person name="Zhang Y."/>
            <person name="Huang X."/>
            <person name="Su Z."/>
            <person name="Tong W."/>
            <person name="Li J."/>
            <person name="Tong Z."/>
            <person name="Li S."/>
            <person name="Ye J."/>
            <person name="Wang L."/>
            <person name="Fang L."/>
            <person name="Lei T."/>
            <person name="Chen C.-S."/>
            <person name="Chen H.-C."/>
            <person name="Xu Z."/>
            <person name="Li H."/>
            <person name="Huang H."/>
            <person name="Zhang F."/>
            <person name="Xu H."/>
            <person name="Li N."/>
            <person name="Zhao C."/>
            <person name="Li S."/>
            <person name="Dong L."/>
            <person name="Huang Y."/>
            <person name="Li L."/>
            <person name="Xi Y."/>
            <person name="Qi Q."/>
            <person name="Li W."/>
            <person name="Zhang B."/>
            <person name="Hu W."/>
            <person name="Zhang Y."/>
            <person name="Tian X."/>
            <person name="Jiao Y."/>
            <person name="Liang X."/>
            <person name="Jin J."/>
            <person name="Gao L."/>
            <person name="Zheng W."/>
            <person name="Hao B."/>
            <person name="Liu S.-M."/>
            <person name="Wang W."/>
            <person name="Yuan L."/>
            <person name="Cao M."/>
            <person name="McDermott J."/>
            <person name="Samudrala R."/>
            <person name="Wang J."/>
            <person name="Wong G.K.-S."/>
            <person name="Yang H."/>
        </authorList>
    </citation>
    <scope>NUCLEOTIDE SEQUENCE [LARGE SCALE GENOMIC DNA]</scope>
    <source>
        <strain>cv. 93-11</strain>
    </source>
</reference>
<name>GOS9_ORYSI</name>
<dbReference type="EMBL" id="X51909">
    <property type="protein sequence ID" value="CAA36189.1"/>
    <property type="molecule type" value="Genomic_DNA"/>
</dbReference>
<dbReference type="EMBL" id="CM000126">
    <property type="protein sequence ID" value="EAY73168.1"/>
    <property type="molecule type" value="Genomic_DNA"/>
</dbReference>
<dbReference type="PIR" id="S19115">
    <property type="entry name" value="S19115"/>
</dbReference>
<dbReference type="SMR" id="A2WMH2"/>
<dbReference type="STRING" id="39946.A2WMH2"/>
<dbReference type="EnsemblPlants" id="BGIOSGA003081-TA">
    <property type="protein sequence ID" value="BGIOSGA003081-PA"/>
    <property type="gene ID" value="BGIOSGA003081"/>
</dbReference>
<dbReference type="Gramene" id="BGIOSGA003081-TA">
    <property type="protein sequence ID" value="BGIOSGA003081-PA"/>
    <property type="gene ID" value="BGIOSGA003081"/>
</dbReference>
<dbReference type="HOGENOM" id="CLU_078923_4_0_1"/>
<dbReference type="OMA" id="WIQSAGG"/>
<dbReference type="Proteomes" id="UP000007015">
    <property type="component" value="Chromosome 1"/>
</dbReference>
<dbReference type="GO" id="GO:0030246">
    <property type="term" value="F:carbohydrate binding"/>
    <property type="evidence" value="ECO:0007669"/>
    <property type="project" value="UniProtKB-KW"/>
</dbReference>
<dbReference type="CDD" id="cd09612">
    <property type="entry name" value="Jacalin"/>
    <property type="match status" value="1"/>
</dbReference>
<dbReference type="Gene3D" id="2.100.10.30">
    <property type="entry name" value="Jacalin-like lectin domain"/>
    <property type="match status" value="1"/>
</dbReference>
<dbReference type="InterPro" id="IPR001229">
    <property type="entry name" value="Jacalin-like_lectin_dom"/>
</dbReference>
<dbReference type="InterPro" id="IPR033734">
    <property type="entry name" value="Jacalin-like_lectin_dom_plant"/>
</dbReference>
<dbReference type="InterPro" id="IPR036404">
    <property type="entry name" value="Jacalin-like_lectin_dom_sf"/>
</dbReference>
<dbReference type="PANTHER" id="PTHR46506">
    <property type="entry name" value="OS05G0143600 PROTEIN"/>
    <property type="match status" value="1"/>
</dbReference>
<dbReference type="Pfam" id="PF01419">
    <property type="entry name" value="Jacalin"/>
    <property type="match status" value="1"/>
</dbReference>
<dbReference type="SMART" id="SM00915">
    <property type="entry name" value="Jacalin"/>
    <property type="match status" value="1"/>
</dbReference>
<dbReference type="SUPFAM" id="SSF51101">
    <property type="entry name" value="Mannose-binding lectins"/>
    <property type="match status" value="1"/>
</dbReference>
<dbReference type="PROSITE" id="PS51752">
    <property type="entry name" value="JACALIN_LECTIN"/>
    <property type="match status" value="1"/>
</dbReference>
<proteinExistence type="evidence at transcript level"/>
<keyword id="KW-0430">Lectin</keyword>
<keyword id="KW-1185">Reference proteome</keyword>
<evidence type="ECO:0000255" key="1">
    <source>
        <dbReference type="PROSITE-ProRule" id="PRU01088"/>
    </source>
</evidence>
<evidence type="ECO:0000269" key="2">
    <source>
    </source>
</evidence>
<comment type="tissue specificity">
    <text evidence="2">Expressed mainly in roots.</text>
</comment>
<accession>A2WMH2</accession>
<accession>P27349</accession>
<accession>Q5VRE9</accession>
<protein>
    <recommendedName>
        <fullName>Protein GOS9</fullName>
    </recommendedName>
</protein>
<gene>
    <name type="primary">GOS9</name>
    <name type="ORF">OsI_001015</name>
</gene>
<feature type="chain" id="PRO_0000300244" description="Protein GOS9">
    <location>
        <begin position="1"/>
        <end position="139"/>
    </location>
</feature>
<feature type="domain" description="Jacalin-type lectin" evidence="1">
    <location>
        <begin position="5"/>
        <end position="139"/>
    </location>
</feature>
<organism>
    <name type="scientific">Oryza sativa subsp. indica</name>
    <name type="common">Rice</name>
    <dbReference type="NCBI Taxonomy" id="39946"/>
    <lineage>
        <taxon>Eukaryota</taxon>
        <taxon>Viridiplantae</taxon>
        <taxon>Streptophyta</taxon>
        <taxon>Embryophyta</taxon>
        <taxon>Tracheophyta</taxon>
        <taxon>Spermatophyta</taxon>
        <taxon>Magnoliopsida</taxon>
        <taxon>Liliopsida</taxon>
        <taxon>Poales</taxon>
        <taxon>Poaceae</taxon>
        <taxon>BOP clade</taxon>
        <taxon>Oryzoideae</taxon>
        <taxon>Oryzeae</taxon>
        <taxon>Oryzinae</taxon>
        <taxon>Oryza</taxon>
        <taxon>Oryza sativa</taxon>
    </lineage>
</organism>